<protein>
    <recommendedName>
        <fullName evidence="1">Integration host factor subunit alpha</fullName>
        <shortName evidence="1">IHF-alpha</shortName>
    </recommendedName>
</protein>
<reference key="1">
    <citation type="journal article" date="2010" name="Appl. Environ. Microbiol.">
        <title>The genome sequence of Psychrobacter arcticus 273-4, a psychroactive Siberian permafrost bacterium, reveals mechanisms for adaptation to low-temperature growth.</title>
        <authorList>
            <person name="Ayala-del-Rio H.L."/>
            <person name="Chain P.S."/>
            <person name="Grzymski J.J."/>
            <person name="Ponder M.A."/>
            <person name="Ivanova N."/>
            <person name="Bergholz P.W."/>
            <person name="Di Bartolo G."/>
            <person name="Hauser L."/>
            <person name="Land M."/>
            <person name="Bakermans C."/>
            <person name="Rodrigues D."/>
            <person name="Klappenbach J."/>
            <person name="Zarka D."/>
            <person name="Larimer F."/>
            <person name="Richardson P."/>
            <person name="Murray A."/>
            <person name="Thomashow M."/>
            <person name="Tiedje J.M."/>
        </authorList>
    </citation>
    <scope>NUCLEOTIDE SEQUENCE [LARGE SCALE GENOMIC DNA]</scope>
    <source>
        <strain>DSM 17307 / VKM B-2377 / 273-4</strain>
    </source>
</reference>
<proteinExistence type="inferred from homology"/>
<accession>Q4FQ67</accession>
<gene>
    <name evidence="1" type="primary">ihfA</name>
    <name evidence="1" type="synonym">himA</name>
    <name type="ordered locus">Psyc_1994</name>
</gene>
<keyword id="KW-0233">DNA recombination</keyword>
<keyword id="KW-0238">DNA-binding</keyword>
<keyword id="KW-1185">Reference proteome</keyword>
<keyword id="KW-0804">Transcription</keyword>
<keyword id="KW-0805">Transcription regulation</keyword>
<keyword id="KW-0810">Translation regulation</keyword>
<evidence type="ECO:0000255" key="1">
    <source>
        <dbReference type="HAMAP-Rule" id="MF_00380"/>
    </source>
</evidence>
<name>IHFA_PSYA2</name>
<comment type="function">
    <text evidence="1">This protein is one of the two subunits of integration host factor, a specific DNA-binding protein that functions in genetic recombination as well as in transcriptional and translational control.</text>
</comment>
<comment type="subunit">
    <text evidence="1">Heterodimer of an alpha and a beta chain.</text>
</comment>
<comment type="similarity">
    <text evidence="1">Belongs to the bacterial histone-like protein family.</text>
</comment>
<sequence>MSTLTKSDMIEHLMSHLNLTRQEGRCLVENFFDELSESLIDGKEVKLSGFGNFELKDKNSRPGRNPKTGEPVAVSARRVVTFKTGQKFRQQVDERLFDQ</sequence>
<feature type="chain" id="PRO_0000277762" description="Integration host factor subunit alpha">
    <location>
        <begin position="1"/>
        <end position="99"/>
    </location>
</feature>
<dbReference type="EMBL" id="CP000082">
    <property type="protein sequence ID" value="AAZ19841.1"/>
    <property type="molecule type" value="Genomic_DNA"/>
</dbReference>
<dbReference type="RefSeq" id="WP_011281249.1">
    <property type="nucleotide sequence ID" value="NC_007204.1"/>
</dbReference>
<dbReference type="SMR" id="Q4FQ67"/>
<dbReference type="STRING" id="259536.Psyc_1994"/>
<dbReference type="KEGG" id="par:Psyc_1994"/>
<dbReference type="eggNOG" id="COG0776">
    <property type="taxonomic scope" value="Bacteria"/>
</dbReference>
<dbReference type="HOGENOM" id="CLU_105066_1_3_6"/>
<dbReference type="OrthoDB" id="9797747at2"/>
<dbReference type="Proteomes" id="UP000000546">
    <property type="component" value="Chromosome"/>
</dbReference>
<dbReference type="GO" id="GO:0005829">
    <property type="term" value="C:cytosol"/>
    <property type="evidence" value="ECO:0007669"/>
    <property type="project" value="TreeGrafter"/>
</dbReference>
<dbReference type="GO" id="GO:0003677">
    <property type="term" value="F:DNA binding"/>
    <property type="evidence" value="ECO:0007669"/>
    <property type="project" value="UniProtKB-UniRule"/>
</dbReference>
<dbReference type="GO" id="GO:0030527">
    <property type="term" value="F:structural constituent of chromatin"/>
    <property type="evidence" value="ECO:0007669"/>
    <property type="project" value="InterPro"/>
</dbReference>
<dbReference type="GO" id="GO:0006310">
    <property type="term" value="P:DNA recombination"/>
    <property type="evidence" value="ECO:0007669"/>
    <property type="project" value="UniProtKB-UniRule"/>
</dbReference>
<dbReference type="GO" id="GO:0009893">
    <property type="term" value="P:positive regulation of metabolic process"/>
    <property type="evidence" value="ECO:0007669"/>
    <property type="project" value="UniProtKB-ARBA"/>
</dbReference>
<dbReference type="GO" id="GO:0006355">
    <property type="term" value="P:regulation of DNA-templated transcription"/>
    <property type="evidence" value="ECO:0007669"/>
    <property type="project" value="UniProtKB-UniRule"/>
</dbReference>
<dbReference type="GO" id="GO:0006417">
    <property type="term" value="P:regulation of translation"/>
    <property type="evidence" value="ECO:0007669"/>
    <property type="project" value="UniProtKB-UniRule"/>
</dbReference>
<dbReference type="CDD" id="cd13835">
    <property type="entry name" value="IHF_A"/>
    <property type="match status" value="1"/>
</dbReference>
<dbReference type="Gene3D" id="4.10.520.10">
    <property type="entry name" value="IHF-like DNA-binding proteins"/>
    <property type="match status" value="1"/>
</dbReference>
<dbReference type="HAMAP" id="MF_00380">
    <property type="entry name" value="IHF_alpha"/>
    <property type="match status" value="1"/>
</dbReference>
<dbReference type="InterPro" id="IPR000119">
    <property type="entry name" value="Hist_DNA-bd"/>
</dbReference>
<dbReference type="InterPro" id="IPR020816">
    <property type="entry name" value="Histone-like_DNA-bd_CS"/>
</dbReference>
<dbReference type="InterPro" id="IPR010992">
    <property type="entry name" value="IHF-like_DNA-bd_dom_sf"/>
</dbReference>
<dbReference type="InterPro" id="IPR005684">
    <property type="entry name" value="IHF_alpha"/>
</dbReference>
<dbReference type="NCBIfam" id="NF001401">
    <property type="entry name" value="PRK00285.1"/>
    <property type="match status" value="1"/>
</dbReference>
<dbReference type="PANTHER" id="PTHR33175">
    <property type="entry name" value="DNA-BINDING PROTEIN HU"/>
    <property type="match status" value="1"/>
</dbReference>
<dbReference type="PANTHER" id="PTHR33175:SF2">
    <property type="entry name" value="INTEGRATION HOST FACTOR SUBUNIT ALPHA"/>
    <property type="match status" value="1"/>
</dbReference>
<dbReference type="Pfam" id="PF00216">
    <property type="entry name" value="Bac_DNA_binding"/>
    <property type="match status" value="1"/>
</dbReference>
<dbReference type="PRINTS" id="PR01727">
    <property type="entry name" value="DNABINDINGHU"/>
</dbReference>
<dbReference type="SMART" id="SM00411">
    <property type="entry name" value="BHL"/>
    <property type="match status" value="1"/>
</dbReference>
<dbReference type="SUPFAM" id="SSF47729">
    <property type="entry name" value="IHF-like DNA-binding proteins"/>
    <property type="match status" value="1"/>
</dbReference>
<dbReference type="PROSITE" id="PS00045">
    <property type="entry name" value="HISTONE_LIKE"/>
    <property type="match status" value="1"/>
</dbReference>
<organism>
    <name type="scientific">Psychrobacter arcticus (strain DSM 17307 / VKM B-2377 / 273-4)</name>
    <dbReference type="NCBI Taxonomy" id="259536"/>
    <lineage>
        <taxon>Bacteria</taxon>
        <taxon>Pseudomonadati</taxon>
        <taxon>Pseudomonadota</taxon>
        <taxon>Gammaproteobacteria</taxon>
        <taxon>Moraxellales</taxon>
        <taxon>Moraxellaceae</taxon>
        <taxon>Psychrobacter</taxon>
    </lineage>
</organism>